<reference key="1">
    <citation type="journal article" date="2000" name="Science">
        <title>The genome sequence of Drosophila melanogaster.</title>
        <authorList>
            <person name="Adams M.D."/>
            <person name="Celniker S.E."/>
            <person name="Holt R.A."/>
            <person name="Evans C.A."/>
            <person name="Gocayne J.D."/>
            <person name="Amanatides P.G."/>
            <person name="Scherer S.E."/>
            <person name="Li P.W."/>
            <person name="Hoskins R.A."/>
            <person name="Galle R.F."/>
            <person name="George R.A."/>
            <person name="Lewis S.E."/>
            <person name="Richards S."/>
            <person name="Ashburner M."/>
            <person name="Henderson S.N."/>
            <person name="Sutton G.G."/>
            <person name="Wortman J.R."/>
            <person name="Yandell M.D."/>
            <person name="Zhang Q."/>
            <person name="Chen L.X."/>
            <person name="Brandon R.C."/>
            <person name="Rogers Y.-H.C."/>
            <person name="Blazej R.G."/>
            <person name="Champe M."/>
            <person name="Pfeiffer B.D."/>
            <person name="Wan K.H."/>
            <person name="Doyle C."/>
            <person name="Baxter E.G."/>
            <person name="Helt G."/>
            <person name="Nelson C.R."/>
            <person name="Miklos G.L.G."/>
            <person name="Abril J.F."/>
            <person name="Agbayani A."/>
            <person name="An H.-J."/>
            <person name="Andrews-Pfannkoch C."/>
            <person name="Baldwin D."/>
            <person name="Ballew R.M."/>
            <person name="Basu A."/>
            <person name="Baxendale J."/>
            <person name="Bayraktaroglu L."/>
            <person name="Beasley E.M."/>
            <person name="Beeson K.Y."/>
            <person name="Benos P.V."/>
            <person name="Berman B.P."/>
            <person name="Bhandari D."/>
            <person name="Bolshakov S."/>
            <person name="Borkova D."/>
            <person name="Botchan M.R."/>
            <person name="Bouck J."/>
            <person name="Brokstein P."/>
            <person name="Brottier P."/>
            <person name="Burtis K.C."/>
            <person name="Busam D.A."/>
            <person name="Butler H."/>
            <person name="Cadieu E."/>
            <person name="Center A."/>
            <person name="Chandra I."/>
            <person name="Cherry J.M."/>
            <person name="Cawley S."/>
            <person name="Dahlke C."/>
            <person name="Davenport L.B."/>
            <person name="Davies P."/>
            <person name="de Pablos B."/>
            <person name="Delcher A."/>
            <person name="Deng Z."/>
            <person name="Mays A.D."/>
            <person name="Dew I."/>
            <person name="Dietz S.M."/>
            <person name="Dodson K."/>
            <person name="Doup L.E."/>
            <person name="Downes M."/>
            <person name="Dugan-Rocha S."/>
            <person name="Dunkov B.C."/>
            <person name="Dunn P."/>
            <person name="Durbin K.J."/>
            <person name="Evangelista C.C."/>
            <person name="Ferraz C."/>
            <person name="Ferriera S."/>
            <person name="Fleischmann W."/>
            <person name="Fosler C."/>
            <person name="Gabrielian A.E."/>
            <person name="Garg N.S."/>
            <person name="Gelbart W.M."/>
            <person name="Glasser K."/>
            <person name="Glodek A."/>
            <person name="Gong F."/>
            <person name="Gorrell J.H."/>
            <person name="Gu Z."/>
            <person name="Guan P."/>
            <person name="Harris M."/>
            <person name="Harris N.L."/>
            <person name="Harvey D.A."/>
            <person name="Heiman T.J."/>
            <person name="Hernandez J.R."/>
            <person name="Houck J."/>
            <person name="Hostin D."/>
            <person name="Houston K.A."/>
            <person name="Howland T.J."/>
            <person name="Wei M.-H."/>
            <person name="Ibegwam C."/>
            <person name="Jalali M."/>
            <person name="Kalush F."/>
            <person name="Karpen G.H."/>
            <person name="Ke Z."/>
            <person name="Kennison J.A."/>
            <person name="Ketchum K.A."/>
            <person name="Kimmel B.E."/>
            <person name="Kodira C.D."/>
            <person name="Kraft C.L."/>
            <person name="Kravitz S."/>
            <person name="Kulp D."/>
            <person name="Lai Z."/>
            <person name="Lasko P."/>
            <person name="Lei Y."/>
            <person name="Levitsky A.A."/>
            <person name="Li J.H."/>
            <person name="Li Z."/>
            <person name="Liang Y."/>
            <person name="Lin X."/>
            <person name="Liu X."/>
            <person name="Mattei B."/>
            <person name="McIntosh T.C."/>
            <person name="McLeod M.P."/>
            <person name="McPherson D."/>
            <person name="Merkulov G."/>
            <person name="Milshina N.V."/>
            <person name="Mobarry C."/>
            <person name="Morris J."/>
            <person name="Moshrefi A."/>
            <person name="Mount S.M."/>
            <person name="Moy M."/>
            <person name="Murphy B."/>
            <person name="Murphy L."/>
            <person name="Muzny D.M."/>
            <person name="Nelson D.L."/>
            <person name="Nelson D.R."/>
            <person name="Nelson K.A."/>
            <person name="Nixon K."/>
            <person name="Nusskern D.R."/>
            <person name="Pacleb J.M."/>
            <person name="Palazzolo M."/>
            <person name="Pittman G.S."/>
            <person name="Pan S."/>
            <person name="Pollard J."/>
            <person name="Puri V."/>
            <person name="Reese M.G."/>
            <person name="Reinert K."/>
            <person name="Remington K."/>
            <person name="Saunders R.D.C."/>
            <person name="Scheeler F."/>
            <person name="Shen H."/>
            <person name="Shue B.C."/>
            <person name="Siden-Kiamos I."/>
            <person name="Simpson M."/>
            <person name="Skupski M.P."/>
            <person name="Smith T.J."/>
            <person name="Spier E."/>
            <person name="Spradling A.C."/>
            <person name="Stapleton M."/>
            <person name="Strong R."/>
            <person name="Sun E."/>
            <person name="Svirskas R."/>
            <person name="Tector C."/>
            <person name="Turner R."/>
            <person name="Venter E."/>
            <person name="Wang A.H."/>
            <person name="Wang X."/>
            <person name="Wang Z.-Y."/>
            <person name="Wassarman D.A."/>
            <person name="Weinstock G.M."/>
            <person name="Weissenbach J."/>
            <person name="Williams S.M."/>
            <person name="Woodage T."/>
            <person name="Worley K.C."/>
            <person name="Wu D."/>
            <person name="Yang S."/>
            <person name="Yao Q.A."/>
            <person name="Ye J."/>
            <person name="Yeh R.-F."/>
            <person name="Zaveri J.S."/>
            <person name="Zhan M."/>
            <person name="Zhang G."/>
            <person name="Zhao Q."/>
            <person name="Zheng L."/>
            <person name="Zheng X.H."/>
            <person name="Zhong F.N."/>
            <person name="Zhong W."/>
            <person name="Zhou X."/>
            <person name="Zhu S.C."/>
            <person name="Zhu X."/>
            <person name="Smith H.O."/>
            <person name="Gibbs R.A."/>
            <person name="Myers E.W."/>
            <person name="Rubin G.M."/>
            <person name="Venter J.C."/>
        </authorList>
    </citation>
    <scope>NUCLEOTIDE SEQUENCE [LARGE SCALE GENOMIC DNA]</scope>
    <source>
        <strain>Berkeley</strain>
    </source>
</reference>
<reference key="2">
    <citation type="journal article" date="2002" name="Genome Biol.">
        <title>Annotation of the Drosophila melanogaster euchromatic genome: a systematic review.</title>
        <authorList>
            <person name="Misra S."/>
            <person name="Crosby M.A."/>
            <person name="Mungall C.J."/>
            <person name="Matthews B.B."/>
            <person name="Campbell K.S."/>
            <person name="Hradecky P."/>
            <person name="Huang Y."/>
            <person name="Kaminker J.S."/>
            <person name="Millburn G.H."/>
            <person name="Prochnik S.E."/>
            <person name="Smith C.D."/>
            <person name="Tupy J.L."/>
            <person name="Whitfield E.J."/>
            <person name="Bayraktaroglu L."/>
            <person name="Berman B.P."/>
            <person name="Bettencourt B.R."/>
            <person name="Celniker S.E."/>
            <person name="de Grey A.D.N.J."/>
            <person name="Drysdale R.A."/>
            <person name="Harris N.L."/>
            <person name="Richter J."/>
            <person name="Russo S."/>
            <person name="Schroeder A.J."/>
            <person name="Shu S.Q."/>
            <person name="Stapleton M."/>
            <person name="Yamada C."/>
            <person name="Ashburner M."/>
            <person name="Gelbart W.M."/>
            <person name="Rubin G.M."/>
            <person name="Lewis S.E."/>
        </authorList>
    </citation>
    <scope>GENOME REANNOTATION</scope>
    <source>
        <strain>Berkeley</strain>
    </source>
</reference>
<reference key="3">
    <citation type="journal article" date="2002" name="Genome Biol.">
        <title>A Drosophila full-length cDNA resource.</title>
        <authorList>
            <person name="Stapleton M."/>
            <person name="Carlson J.W."/>
            <person name="Brokstein P."/>
            <person name="Yu C."/>
            <person name="Champe M."/>
            <person name="George R.A."/>
            <person name="Guarin H."/>
            <person name="Kronmiller B."/>
            <person name="Pacleb J.M."/>
            <person name="Park S."/>
            <person name="Wan K.H."/>
            <person name="Rubin G.M."/>
            <person name="Celniker S.E."/>
        </authorList>
    </citation>
    <scope>NUCLEOTIDE SEQUENCE [LARGE SCALE MRNA]</scope>
    <source>
        <strain>Berkeley</strain>
        <tissue>Embryo</tissue>
    </source>
</reference>
<reference key="4">
    <citation type="book" date="2006" name="Abstracts of the 47th Annual Drosophila Research Conference">
        <title>The function of StIP in the JAK/STAT pathway.</title>
        <authorList>
            <person name="Han L."/>
            <person name="Harrison D."/>
        </authorList>
    </citation>
    <scope>FUNCTION IN THE STAT PATHWAY</scope>
</reference>
<reference key="5">
    <citation type="journal article" date="2022" name="Nat. Cell Biol.">
        <title>Elongator stabilizes microtubules to control central spindle asymmetry and polarized trafficking of cell fate determinants.</title>
        <authorList>
            <person name="Planelles-Herrero V.J."/>
            <person name="Bittleston A."/>
            <person name="Seum C."/>
            <person name="Daeden A."/>
            <person name="Gaitan M.G."/>
            <person name="Derivery E."/>
        </authorList>
    </citation>
    <scope>FUNCTION</scope>
    <scope>IDENTIFICATION IN THE ELONGATOR COMPLEX</scope>
    <scope>INTERACTION WITH MICROTUBULES</scope>
    <scope>SUBCELLULAR LOCATION</scope>
    <scope>DISRUPTION PHENOTYPE</scope>
    <scope>IDENTIFICATION BY MASS SPECTROMETRY</scope>
</reference>
<name>ELP2_DROME</name>
<protein>
    <recommendedName>
        <fullName evidence="6">Elongator complex protein 2</fullName>
    </recommendedName>
    <alternativeName>
        <fullName>Stat3-interacting protein homolog</fullName>
    </alternativeName>
</protein>
<accession>Q7K4B3</accession>
<sequence>MQVENLHTSVACNRCTECADWGPNGWIAYGACNAIAIMDPKFQGNSAKVLFTLVEHTKRVNTVRWLDCDKLLSGGDDAIAILWELDETGTTKSFTLKGHTSGVNTVDGIRQQDGSWLLATAAADTTIKLWTFQDNNYVCFQTISLSDGFCFCLRLQLLPKSNQVLLAFSGDDETVSLWSEQVETAGEGDSLGRQFQRKHKLTGHEDWVRGLDFVVDGEDLLLASGSQDNFIRLWRIAPRSKEQMQENRVDLHQLSHNDDEIKVEEKILQLGKEAWYAVSLESVLYGHEGWIYGVHWHKTPDQELRLLSASIDKTVIIWAPTEEGIWLEEVRVGEVGGNSVGFYGGKFSGDGHSIMAHSYQGGFHIWSQDPDRPQLWTPGVIVGGHYGEVRDLAWEHSGAYLMTASADQTTRLHAPWLQDGANPTWHELARPQIHGYDMQALALLSRYKFASGAEEKIVRTFQAPANFIENFRHISGIENDDAGDVLLDSLPKGASVPSLGLSNKAVYKVDSEVESTSKTSKDEYPDNYFVPIALETPPQEETLMQNTLWPELQKLYGHGYEIFALAATADGSLLASTCKASNAEHAQIILWNPSNWKQIQKLSGHQLTVTQLSFSPDSRYLLSVSRDRRWCLYERQDSSVSYQLVASTDKSNGVHTRIIWSCDWSHDGQFFVTSSRDGKVVVWKKEEDCKESSLNGWQANGVLELKNESITAVAFSNSYLSGTDDTYILALGTETGLIKIYQFVRGAWKLLSDLNKSQAHHLTVRRLQFRPGKQLQLASCGEDHLVRIYDIKLT</sequence>
<keyword id="KW-0963">Cytoplasm</keyword>
<keyword id="KW-0206">Cytoskeleton</keyword>
<keyword id="KW-0493">Microtubule</keyword>
<keyword id="KW-0539">Nucleus</keyword>
<keyword id="KW-1185">Reference proteome</keyword>
<keyword id="KW-0677">Repeat</keyword>
<keyword id="KW-0819">tRNA processing</keyword>
<keyword id="KW-0853">WD repeat</keyword>
<evidence type="ECO:0000250" key="1">
    <source>
        <dbReference type="UniProtKB" id="P42935"/>
    </source>
</evidence>
<evidence type="ECO:0000250" key="2">
    <source>
        <dbReference type="UniProtKB" id="Q6IA86"/>
    </source>
</evidence>
<evidence type="ECO:0000255" key="3"/>
<evidence type="ECO:0000269" key="4">
    <source>
    </source>
</evidence>
<evidence type="ECO:0000269" key="5">
    <source ref="4"/>
</evidence>
<evidence type="ECO:0000305" key="6"/>
<evidence type="ECO:0000312" key="7">
    <source>
        <dbReference type="FlyBase" id="FBgn0033540"/>
    </source>
</evidence>
<evidence type="ECO:0000312" key="8">
    <source>
        <dbReference type="Proteomes" id="UP000000803"/>
    </source>
</evidence>
<comment type="function">
    <text evidence="2 4 5">Component of the elongator complex, which is required for multiple tRNA modifications, including mcm5U (5-methoxycarbonylmethyl uridine), mcm5s2U (5-methoxycarbonylmethyl-2-thiouridine), and ncm5U (5-carbamoylmethyl uridine) (PubMed:36302967). The elongator complex catalyzes the formation of carboxymethyluridine in the wobble base at position 34 in tRNAs (PubMed:36302967). Binding by the elongator complex stabilizes microtubules and promotes their growth (PubMed:36302967). This induces central spindle asymmetry, promoting polarized signaling endosome trafficking during asymmetric cell division and cell fate assignation of sensory organ precursor cells (PubMed:36302967). Involved in the regulation of the STAT pathway (Ref.4).</text>
</comment>
<comment type="pathway">
    <text evidence="2">tRNA modification; 5-methoxycarbonylmethyl-2-thiouridine-tRNA biosynthesis.</text>
</comment>
<comment type="subunit">
    <text evidence="4">Component of the elongator complex composed of Elp1, Elp2, Elp3, Elp4, Elp5 and Elp6 (PubMed:36302967). The elongator complex associates with and stabilizes microtubules; efficient interaction requires the full complex (PubMed:36302967).</text>
</comment>
<comment type="subcellular location">
    <subcellularLocation>
        <location evidence="2">Cytoplasm</location>
    </subcellularLocation>
    <subcellularLocation>
        <location evidence="2">Nucleus</location>
    </subcellularLocation>
    <subcellularLocation>
        <location evidence="4">Cytoplasm</location>
        <location evidence="4">Cytoskeleton</location>
        <location evidence="4">Spindle</location>
    </subcellularLocation>
    <text evidence="4">During asymmetric cell division of sensory organ precursor cells the elongator complex preferentially binds and stabilizes microtubules on the anterior side (pIIb daughter cell) of the spindle.</text>
</comment>
<comment type="domain">
    <text evidence="1">Folds into a two seven-bladed beta-propeller structure which is required for elongator complex assembly.</text>
</comment>
<comment type="disruption phenotype">
    <text evidence="4">RNAi-mediated knockdown is lethal in larval third instar (L3) stage (PubMed:36302967). RNAi-mediated knockdown in sensory organ precursor cells abolishes central spindle asymmetry during asymmetric cell division (PubMed:36302967).</text>
</comment>
<comment type="similarity">
    <text evidence="6">Belongs to the WD repeat ELP2 family.</text>
</comment>
<comment type="caution">
    <text evidence="2">The elongator complex was originally thought to play a role in transcription elongation. However, it is no longer thought to play a direct role in this process and its primary function is thought to be in tRNA modification.</text>
</comment>
<gene>
    <name evidence="7" type="primary">Elp2</name>
    <name evidence="7" type="synonym">StIP</name>
    <name evidence="7" type="ORF">CG11887</name>
</gene>
<proteinExistence type="evidence at protein level"/>
<dbReference type="EMBL" id="AE013599">
    <property type="protein sequence ID" value="AAF58765.2"/>
    <property type="molecule type" value="Genomic_DNA"/>
</dbReference>
<dbReference type="EMBL" id="AY052019">
    <property type="protein sequence ID" value="AAK93443.1"/>
    <property type="molecule type" value="mRNA"/>
</dbReference>
<dbReference type="RefSeq" id="NP_610600.1">
    <property type="nucleotide sequence ID" value="NM_136756.4"/>
</dbReference>
<dbReference type="SMR" id="Q7K4B3"/>
<dbReference type="BioGRID" id="61932">
    <property type="interactions" value="3"/>
</dbReference>
<dbReference type="ComplexPortal" id="CPX-10346">
    <property type="entry name" value="Elongator holoenzyme complex"/>
</dbReference>
<dbReference type="FunCoup" id="Q7K4B3">
    <property type="interactions" value="1364"/>
</dbReference>
<dbReference type="IntAct" id="Q7K4B3">
    <property type="interactions" value="5"/>
</dbReference>
<dbReference type="STRING" id="7227.FBpp0087307"/>
<dbReference type="PaxDb" id="7227-FBpp0087307"/>
<dbReference type="EnsemblMetazoa" id="FBtr0088212">
    <property type="protein sequence ID" value="FBpp0087307"/>
    <property type="gene ID" value="FBgn0033540"/>
</dbReference>
<dbReference type="GeneID" id="36123"/>
<dbReference type="KEGG" id="dme:Dmel_CG11887"/>
<dbReference type="AGR" id="FB:FBgn0033540"/>
<dbReference type="CTD" id="55250"/>
<dbReference type="FlyBase" id="FBgn0033540">
    <property type="gene designation" value="Elp2"/>
</dbReference>
<dbReference type="VEuPathDB" id="VectorBase:FBgn0033540"/>
<dbReference type="eggNOG" id="KOG0645">
    <property type="taxonomic scope" value="Eukaryota"/>
</dbReference>
<dbReference type="eggNOG" id="KOG1063">
    <property type="taxonomic scope" value="Eukaryota"/>
</dbReference>
<dbReference type="GeneTree" id="ENSGT00390000000916"/>
<dbReference type="HOGENOM" id="CLU_006430_1_0_1"/>
<dbReference type="InParanoid" id="Q7K4B3"/>
<dbReference type="OMA" id="ENFRHIS"/>
<dbReference type="OrthoDB" id="27911at2759"/>
<dbReference type="PhylomeDB" id="Q7K4B3"/>
<dbReference type="UniPathway" id="UPA00988"/>
<dbReference type="BioGRID-ORCS" id="36123">
    <property type="hits" value="0 hits in 1 CRISPR screen"/>
</dbReference>
<dbReference type="GenomeRNAi" id="36123"/>
<dbReference type="PRO" id="PR:Q7K4B3"/>
<dbReference type="Proteomes" id="UP000000803">
    <property type="component" value="Chromosome 2R"/>
</dbReference>
<dbReference type="Bgee" id="FBgn0033540">
    <property type="expression patterns" value="Expressed in adult enteroendocrine precursor cell in adult midgut (Drosophila) and 41 other cell types or tissues"/>
</dbReference>
<dbReference type="GO" id="GO:0005737">
    <property type="term" value="C:cytoplasm"/>
    <property type="evidence" value="ECO:0007669"/>
    <property type="project" value="UniProtKB-SubCell"/>
</dbReference>
<dbReference type="GO" id="GO:0033588">
    <property type="term" value="C:elongator holoenzyme complex"/>
    <property type="evidence" value="ECO:0000314"/>
    <property type="project" value="FlyBase"/>
</dbReference>
<dbReference type="GO" id="GO:0005874">
    <property type="term" value="C:microtubule"/>
    <property type="evidence" value="ECO:0007669"/>
    <property type="project" value="UniProtKB-KW"/>
</dbReference>
<dbReference type="GO" id="GO:0005634">
    <property type="term" value="C:nucleus"/>
    <property type="evidence" value="ECO:0007669"/>
    <property type="project" value="UniProtKB-SubCell"/>
</dbReference>
<dbReference type="GO" id="GO:0005819">
    <property type="term" value="C:spindle"/>
    <property type="evidence" value="ECO:0007669"/>
    <property type="project" value="UniProtKB-SubCell"/>
</dbReference>
<dbReference type="GO" id="GO:0061867">
    <property type="term" value="P:establishment of mitotic spindle asymmetry"/>
    <property type="evidence" value="ECO:0000314"/>
    <property type="project" value="FlyBase"/>
</dbReference>
<dbReference type="GO" id="GO:0002098">
    <property type="term" value="P:tRNA wobble uridine modification"/>
    <property type="evidence" value="ECO:0007669"/>
    <property type="project" value="InterPro"/>
</dbReference>
<dbReference type="FunFam" id="2.130.10.10:FF:000400">
    <property type="entry name" value="Elongator acetyltransferase complex subunit 2"/>
    <property type="match status" value="1"/>
</dbReference>
<dbReference type="FunFam" id="2.130.10.10:FF:002199">
    <property type="entry name" value="Probable elongator complex protein 2"/>
    <property type="match status" value="1"/>
</dbReference>
<dbReference type="FunFam" id="2.130.10.10:FF:002203">
    <property type="entry name" value="Probable elongator complex protein 2"/>
    <property type="match status" value="1"/>
</dbReference>
<dbReference type="Gene3D" id="2.130.10.10">
    <property type="entry name" value="YVTN repeat-like/Quinoprotein amine dehydrogenase"/>
    <property type="match status" value="5"/>
</dbReference>
<dbReference type="InterPro" id="IPR037289">
    <property type="entry name" value="Elp2"/>
</dbReference>
<dbReference type="InterPro" id="IPR015943">
    <property type="entry name" value="WD40/YVTN_repeat-like_dom_sf"/>
</dbReference>
<dbReference type="InterPro" id="IPR019775">
    <property type="entry name" value="WD40_repeat_CS"/>
</dbReference>
<dbReference type="InterPro" id="IPR036322">
    <property type="entry name" value="WD40_repeat_dom_sf"/>
</dbReference>
<dbReference type="InterPro" id="IPR001680">
    <property type="entry name" value="WD40_rpt"/>
</dbReference>
<dbReference type="PANTHER" id="PTHR44111">
    <property type="entry name" value="ELONGATOR COMPLEX PROTEIN 2"/>
    <property type="match status" value="1"/>
</dbReference>
<dbReference type="PANTHER" id="PTHR44111:SF1">
    <property type="entry name" value="ELONGATOR COMPLEX PROTEIN 2"/>
    <property type="match status" value="1"/>
</dbReference>
<dbReference type="Pfam" id="PF00400">
    <property type="entry name" value="WD40"/>
    <property type="match status" value="8"/>
</dbReference>
<dbReference type="SMART" id="SM00320">
    <property type="entry name" value="WD40"/>
    <property type="match status" value="11"/>
</dbReference>
<dbReference type="SUPFAM" id="SSF50978">
    <property type="entry name" value="WD40 repeat-like"/>
    <property type="match status" value="3"/>
</dbReference>
<dbReference type="PROSITE" id="PS00678">
    <property type="entry name" value="WD_REPEATS_1"/>
    <property type="match status" value="1"/>
</dbReference>
<dbReference type="PROSITE" id="PS50082">
    <property type="entry name" value="WD_REPEATS_2"/>
    <property type="match status" value="7"/>
</dbReference>
<dbReference type="PROSITE" id="PS50294">
    <property type="entry name" value="WD_REPEATS_REGION"/>
    <property type="match status" value="3"/>
</dbReference>
<feature type="chain" id="PRO_0000284002" description="Elongator complex protein 2">
    <location>
        <begin position="1"/>
        <end position="794"/>
    </location>
</feature>
<feature type="repeat" description="WD 1" evidence="3">
    <location>
        <begin position="55"/>
        <end position="93"/>
    </location>
</feature>
<feature type="repeat" description="WD 2" evidence="3">
    <location>
        <begin position="98"/>
        <end position="140"/>
    </location>
</feature>
<feature type="repeat" description="WD 3" evidence="3">
    <location>
        <begin position="147"/>
        <end position="188"/>
    </location>
</feature>
<feature type="repeat" description="WD 4" evidence="3">
    <location>
        <begin position="203"/>
        <end position="244"/>
    </location>
</feature>
<feature type="repeat" description="WD 5" evidence="3">
    <location>
        <begin position="286"/>
        <end position="328"/>
    </location>
</feature>
<feature type="repeat" description="WD 6" evidence="3">
    <location>
        <begin position="337"/>
        <end position="376"/>
    </location>
</feature>
<feature type="repeat" description="WD 7" evidence="3">
    <location>
        <begin position="384"/>
        <end position="423"/>
    </location>
</feature>
<feature type="repeat" description="WD 8" evidence="3">
    <location>
        <begin position="433"/>
        <end position="472"/>
    </location>
</feature>
<feature type="repeat" description="WD 9" evidence="3">
    <location>
        <begin position="557"/>
        <end position="601"/>
    </location>
</feature>
<feature type="repeat" description="WD 10" evidence="3">
    <location>
        <begin position="604"/>
        <end position="643"/>
    </location>
</feature>
<feature type="repeat" description="WD 11" evidence="3">
    <location>
        <begin position="654"/>
        <end position="693"/>
    </location>
</feature>
<feature type="repeat" description="WD 12" evidence="3">
    <location>
        <begin position="705"/>
        <end position="751"/>
    </location>
</feature>
<feature type="repeat" description="WD 13" evidence="3">
    <location>
        <begin position="759"/>
        <end position="794"/>
    </location>
</feature>
<organism evidence="8">
    <name type="scientific">Drosophila melanogaster</name>
    <name type="common">Fruit fly</name>
    <dbReference type="NCBI Taxonomy" id="7227"/>
    <lineage>
        <taxon>Eukaryota</taxon>
        <taxon>Metazoa</taxon>
        <taxon>Ecdysozoa</taxon>
        <taxon>Arthropoda</taxon>
        <taxon>Hexapoda</taxon>
        <taxon>Insecta</taxon>
        <taxon>Pterygota</taxon>
        <taxon>Neoptera</taxon>
        <taxon>Endopterygota</taxon>
        <taxon>Diptera</taxon>
        <taxon>Brachycera</taxon>
        <taxon>Muscomorpha</taxon>
        <taxon>Ephydroidea</taxon>
        <taxon>Drosophilidae</taxon>
        <taxon>Drosophila</taxon>
        <taxon>Sophophora</taxon>
    </lineage>
</organism>